<keyword id="KW-0150">Chloroplast</keyword>
<keyword id="KW-0249">Electron transport</keyword>
<keyword id="KW-0472">Membrane</keyword>
<keyword id="KW-0602">Photosynthesis</keyword>
<keyword id="KW-0934">Plastid</keyword>
<keyword id="KW-1185">Reference proteome</keyword>
<keyword id="KW-0793">Thylakoid</keyword>
<keyword id="KW-0812">Transmembrane</keyword>
<keyword id="KW-1133">Transmembrane helix</keyword>
<keyword id="KW-0813">Transport</keyword>
<sequence length="29" mass="3170">MDIVSLAWAALMVVFTFSLSLVVWGRSGL</sequence>
<geneLocation type="chloroplast"/>
<name>PETN_ORYNI</name>
<proteinExistence type="inferred from homology"/>
<gene>
    <name evidence="1" type="primary">petN</name>
</gene>
<evidence type="ECO:0000255" key="1">
    <source>
        <dbReference type="HAMAP-Rule" id="MF_00395"/>
    </source>
</evidence>
<evidence type="ECO:0000312" key="2">
    <source>
        <dbReference type="Proteomes" id="UP000006591"/>
    </source>
</evidence>
<protein>
    <recommendedName>
        <fullName evidence="1">Cytochrome b6-f complex subunit 8</fullName>
    </recommendedName>
    <alternativeName>
        <fullName evidence="1">Cytochrome b6-f complex subunit PetN</fullName>
    </alternativeName>
    <alternativeName>
        <fullName evidence="1">Cytochrome b6-f complex subunit VIII</fullName>
    </alternativeName>
</protein>
<comment type="function">
    <text evidence="1">Component of the cytochrome b6-f complex, which mediates electron transfer between photosystem II (PSII) and photosystem I (PSI), cyclic electron flow around PSI, and state transitions.</text>
</comment>
<comment type="subunit">
    <text evidence="1">The 4 large subunits of the cytochrome b6-f complex are cytochrome b6, subunit IV (17 kDa polypeptide, PetD), cytochrome f and the Rieske protein, while the 4 small subunits are PetG, PetL, PetM and PetN. The complex functions as a dimer.</text>
</comment>
<comment type="subcellular location">
    <subcellularLocation>
        <location evidence="1">Plastid</location>
        <location evidence="1">Chloroplast thylakoid membrane</location>
        <topology evidence="1">Single-pass membrane protein</topology>
    </subcellularLocation>
</comment>
<comment type="similarity">
    <text evidence="1">Belongs to the PetN family.</text>
</comment>
<organism>
    <name type="scientific">Oryza nivara</name>
    <name type="common">Indian wild rice</name>
    <name type="synonym">Oryza sativa f. spontanea</name>
    <dbReference type="NCBI Taxonomy" id="4536"/>
    <lineage>
        <taxon>Eukaryota</taxon>
        <taxon>Viridiplantae</taxon>
        <taxon>Streptophyta</taxon>
        <taxon>Embryophyta</taxon>
        <taxon>Tracheophyta</taxon>
        <taxon>Spermatophyta</taxon>
        <taxon>Magnoliopsida</taxon>
        <taxon>Liliopsida</taxon>
        <taxon>Poales</taxon>
        <taxon>Poaceae</taxon>
        <taxon>BOP clade</taxon>
        <taxon>Oryzoideae</taxon>
        <taxon>Oryzeae</taxon>
        <taxon>Oryzinae</taxon>
        <taxon>Oryza</taxon>
    </lineage>
</organism>
<feature type="chain" id="PRO_0000217120" description="Cytochrome b6-f complex subunit 8">
    <location>
        <begin position="1"/>
        <end position="29"/>
    </location>
</feature>
<feature type="transmembrane region" description="Helical" evidence="1">
    <location>
        <begin position="3"/>
        <end position="23"/>
    </location>
</feature>
<accession>Q6ENI5</accession>
<dbReference type="EMBL" id="AP006728">
    <property type="protein sequence ID" value="BAD26767.1"/>
    <property type="molecule type" value="Genomic_DNA"/>
</dbReference>
<dbReference type="RefSeq" id="YP_052738.1">
    <property type="nucleotide sequence ID" value="NC_005973.1"/>
</dbReference>
<dbReference type="SMR" id="Q6ENI5"/>
<dbReference type="GeneID" id="2885888"/>
<dbReference type="Proteomes" id="UP000006591">
    <property type="component" value="Chloroplast"/>
</dbReference>
<dbReference type="GO" id="GO:0009535">
    <property type="term" value="C:chloroplast thylakoid membrane"/>
    <property type="evidence" value="ECO:0007669"/>
    <property type="project" value="UniProtKB-SubCell"/>
</dbReference>
<dbReference type="GO" id="GO:0009512">
    <property type="term" value="C:cytochrome b6f complex"/>
    <property type="evidence" value="ECO:0007669"/>
    <property type="project" value="InterPro"/>
</dbReference>
<dbReference type="GO" id="GO:0009536">
    <property type="term" value="C:plastid"/>
    <property type="evidence" value="ECO:0000305"/>
    <property type="project" value="Gramene"/>
</dbReference>
<dbReference type="GO" id="GO:0045158">
    <property type="term" value="F:electron transporter, transferring electrons within cytochrome b6/f complex of photosystem II activity"/>
    <property type="evidence" value="ECO:0007669"/>
    <property type="project" value="InterPro"/>
</dbReference>
<dbReference type="GO" id="GO:0017004">
    <property type="term" value="P:cytochrome complex assembly"/>
    <property type="evidence" value="ECO:0007669"/>
    <property type="project" value="UniProtKB-UniRule"/>
</dbReference>
<dbReference type="GO" id="GO:0015979">
    <property type="term" value="P:photosynthesis"/>
    <property type="evidence" value="ECO:0007669"/>
    <property type="project" value="UniProtKB-KW"/>
</dbReference>
<dbReference type="HAMAP" id="MF_00395">
    <property type="entry name" value="Cytb6_f_PetN"/>
    <property type="match status" value="1"/>
</dbReference>
<dbReference type="InterPro" id="IPR036143">
    <property type="entry name" value="Cytochr_b6-f_cplx_su8_sf"/>
</dbReference>
<dbReference type="InterPro" id="IPR005497">
    <property type="entry name" value="Cytochrome_b6-f_cplx_su8"/>
</dbReference>
<dbReference type="Pfam" id="PF03742">
    <property type="entry name" value="PetN"/>
    <property type="match status" value="1"/>
</dbReference>
<dbReference type="SUPFAM" id="SSF103451">
    <property type="entry name" value="PetN subunit of the cytochrome b6f complex"/>
    <property type="match status" value="1"/>
</dbReference>
<reference key="1">
    <citation type="journal article" date="2004" name="Gene">
        <title>The complete nucleotide sequence of wild rice (Oryza nivara) chloroplast genome: first genome wide comparative sequence analysis of wild and cultivated rice.</title>
        <authorList>
            <person name="Masood M.S."/>
            <person name="Nishikawa T."/>
            <person name="Fukuoka S."/>
            <person name="Njenga P.K."/>
            <person name="Tsudzuki T."/>
            <person name="Kadowaki K."/>
        </authorList>
    </citation>
    <scope>NUCLEOTIDE SEQUENCE [LARGE SCALE GENOMIC DNA]</scope>
    <source>
        <strain evidence="2">cv. SL10</strain>
    </source>
</reference>